<accession>B1KLT1</accession>
<name>FABV_SHEWM</name>
<evidence type="ECO:0000255" key="1">
    <source>
        <dbReference type="HAMAP-Rule" id="MF_01838"/>
    </source>
</evidence>
<protein>
    <recommendedName>
        <fullName evidence="1">Enoyl-[acyl-carrier-protein] reductase [NADH]</fullName>
        <shortName evidence="1">ENR</shortName>
        <ecNumber evidence="1">1.3.1.9</ecNumber>
    </recommendedName>
</protein>
<comment type="function">
    <text evidence="1">Involved in the final reduction of the elongation cycle of fatty acid synthesis (FAS II). Catalyzes the reduction of a carbon-carbon double bond in an enoyl moiety that is covalently linked to an acyl carrier protein (ACP).</text>
</comment>
<comment type="catalytic activity">
    <reaction evidence="1">
        <text>a 2,3-saturated acyl-[ACP] + NAD(+) = a (2E)-enoyl-[ACP] + NADH + H(+)</text>
        <dbReference type="Rhea" id="RHEA:10240"/>
        <dbReference type="Rhea" id="RHEA-COMP:9925"/>
        <dbReference type="Rhea" id="RHEA-COMP:9926"/>
        <dbReference type="ChEBI" id="CHEBI:15378"/>
        <dbReference type="ChEBI" id="CHEBI:57540"/>
        <dbReference type="ChEBI" id="CHEBI:57945"/>
        <dbReference type="ChEBI" id="CHEBI:78784"/>
        <dbReference type="ChEBI" id="CHEBI:78785"/>
        <dbReference type="EC" id="1.3.1.9"/>
    </reaction>
</comment>
<comment type="pathway">
    <text evidence="1">Lipid metabolism; fatty acid biosynthesis.</text>
</comment>
<comment type="subunit">
    <text evidence="1">Monomer.</text>
</comment>
<comment type="similarity">
    <text evidence="1">Belongs to the TER reductase family.</text>
</comment>
<organism>
    <name type="scientific">Shewanella woodyi (strain ATCC 51908 / MS32)</name>
    <dbReference type="NCBI Taxonomy" id="392500"/>
    <lineage>
        <taxon>Bacteria</taxon>
        <taxon>Pseudomonadati</taxon>
        <taxon>Pseudomonadota</taxon>
        <taxon>Gammaproteobacteria</taxon>
        <taxon>Alteromonadales</taxon>
        <taxon>Shewanellaceae</taxon>
        <taxon>Shewanella</taxon>
    </lineage>
</organism>
<gene>
    <name evidence="1" type="primary">fabV</name>
    <name type="ordered locus">Swoo_3107</name>
</gene>
<keyword id="KW-0275">Fatty acid biosynthesis</keyword>
<keyword id="KW-0276">Fatty acid metabolism</keyword>
<keyword id="KW-0444">Lipid biosynthesis</keyword>
<keyword id="KW-0443">Lipid metabolism</keyword>
<keyword id="KW-0520">NAD</keyword>
<keyword id="KW-0560">Oxidoreductase</keyword>
<keyword id="KW-1185">Reference proteome</keyword>
<feature type="chain" id="PRO_1000188370" description="Enoyl-[acyl-carrier-protein] reductase [NADH]">
    <location>
        <begin position="1"/>
        <end position="400"/>
    </location>
</feature>
<feature type="active site" description="Proton donor" evidence="1">
    <location>
        <position position="235"/>
    </location>
</feature>
<feature type="binding site" evidence="1">
    <location>
        <begin position="48"/>
        <end position="53"/>
    </location>
    <ligand>
        <name>NAD(+)</name>
        <dbReference type="ChEBI" id="CHEBI:57540"/>
    </ligand>
</feature>
<feature type="binding site" evidence="1">
    <location>
        <begin position="74"/>
        <end position="75"/>
    </location>
    <ligand>
        <name>NAD(+)</name>
        <dbReference type="ChEBI" id="CHEBI:57540"/>
    </ligand>
</feature>
<feature type="binding site" evidence="1">
    <location>
        <begin position="111"/>
        <end position="112"/>
    </location>
    <ligand>
        <name>NAD(+)</name>
        <dbReference type="ChEBI" id="CHEBI:57540"/>
    </ligand>
</feature>
<feature type="binding site" evidence="1">
    <location>
        <begin position="139"/>
        <end position="140"/>
    </location>
    <ligand>
        <name>NAD(+)</name>
        <dbReference type="ChEBI" id="CHEBI:57540"/>
    </ligand>
</feature>
<feature type="binding site" evidence="1">
    <location>
        <position position="225"/>
    </location>
    <ligand>
        <name>substrate</name>
    </ligand>
</feature>
<feature type="binding site" evidence="1">
    <location>
        <position position="244"/>
    </location>
    <ligand>
        <name>NAD(+)</name>
        <dbReference type="ChEBI" id="CHEBI:57540"/>
    </ligand>
</feature>
<feature type="binding site" evidence="1">
    <location>
        <begin position="273"/>
        <end position="275"/>
    </location>
    <ligand>
        <name>NAD(+)</name>
        <dbReference type="ChEBI" id="CHEBI:57540"/>
    </ligand>
</feature>
<feature type="site" description="Plays an important role in discriminating NADH against NADPH" evidence="1">
    <location>
        <position position="75"/>
    </location>
</feature>
<proteinExistence type="inferred from homology"/>
<dbReference type="EC" id="1.3.1.9" evidence="1"/>
<dbReference type="EMBL" id="CP000961">
    <property type="protein sequence ID" value="ACA87378.1"/>
    <property type="molecule type" value="Genomic_DNA"/>
</dbReference>
<dbReference type="RefSeq" id="WP_012325714.1">
    <property type="nucleotide sequence ID" value="NC_010506.1"/>
</dbReference>
<dbReference type="SMR" id="B1KLT1"/>
<dbReference type="STRING" id="392500.Swoo_3107"/>
<dbReference type="KEGG" id="swd:Swoo_3107"/>
<dbReference type="eggNOG" id="COG3007">
    <property type="taxonomic scope" value="Bacteria"/>
</dbReference>
<dbReference type="HOGENOM" id="CLU_057698_1_0_6"/>
<dbReference type="UniPathway" id="UPA00094"/>
<dbReference type="Proteomes" id="UP000002168">
    <property type="component" value="Chromosome"/>
</dbReference>
<dbReference type="GO" id="GO:0004318">
    <property type="term" value="F:enoyl-[acyl-carrier-protein] reductase (NADH) activity"/>
    <property type="evidence" value="ECO:0007669"/>
    <property type="project" value="UniProtKB-UniRule"/>
</dbReference>
<dbReference type="GO" id="GO:0051287">
    <property type="term" value="F:NAD binding"/>
    <property type="evidence" value="ECO:0007669"/>
    <property type="project" value="UniProtKB-UniRule"/>
</dbReference>
<dbReference type="GO" id="GO:0050343">
    <property type="term" value="F:trans-2-enoyl-CoA reductase (NADH) activity"/>
    <property type="evidence" value="ECO:0007669"/>
    <property type="project" value="TreeGrafter"/>
</dbReference>
<dbReference type="GO" id="GO:0006633">
    <property type="term" value="P:fatty acid biosynthetic process"/>
    <property type="evidence" value="ECO:0007669"/>
    <property type="project" value="UniProtKB-UniRule"/>
</dbReference>
<dbReference type="FunFam" id="3.40.50.720:FF:000221">
    <property type="entry name" value="Enoyl-[acyl-carrier-protein] reductase [NADH]"/>
    <property type="match status" value="1"/>
</dbReference>
<dbReference type="Gene3D" id="3.40.50.720">
    <property type="entry name" value="NAD(P)-binding Rossmann-like Domain"/>
    <property type="match status" value="1"/>
</dbReference>
<dbReference type="HAMAP" id="MF_01838">
    <property type="entry name" value="FabV_reductase"/>
    <property type="match status" value="1"/>
</dbReference>
<dbReference type="InterPro" id="IPR024906">
    <property type="entry name" value="Eno_Rdtase_FAD-bd_dom"/>
</dbReference>
<dbReference type="InterPro" id="IPR024910">
    <property type="entry name" value="Enoyl-CoA_Rdtase_cat_dom"/>
</dbReference>
<dbReference type="InterPro" id="IPR050048">
    <property type="entry name" value="FabV-like_NADH_b"/>
</dbReference>
<dbReference type="InterPro" id="IPR010758">
    <property type="entry name" value="Trans-2-enoyl-CoA_reductase"/>
</dbReference>
<dbReference type="NCBIfam" id="NF043048">
    <property type="entry name" value="EnoyACPredFabV"/>
    <property type="match status" value="1"/>
</dbReference>
<dbReference type="NCBIfam" id="NF010177">
    <property type="entry name" value="PRK13656.1"/>
    <property type="match status" value="1"/>
</dbReference>
<dbReference type="PANTHER" id="PTHR37480">
    <property type="entry name" value="ENOYL-[ACYL-CARRIER-PROTEIN] REDUCTASE [NADH]"/>
    <property type="match status" value="1"/>
</dbReference>
<dbReference type="PANTHER" id="PTHR37480:SF1">
    <property type="entry name" value="ENOYL-[ACYL-CARRIER-PROTEIN] REDUCTASE [NADH]"/>
    <property type="match status" value="1"/>
</dbReference>
<dbReference type="Pfam" id="PF07055">
    <property type="entry name" value="Eno-Rase_FAD_bd"/>
    <property type="match status" value="1"/>
</dbReference>
<dbReference type="Pfam" id="PF12242">
    <property type="entry name" value="Eno-Rase_NADH_b"/>
    <property type="match status" value="1"/>
</dbReference>
<dbReference type="Pfam" id="PF12241">
    <property type="entry name" value="Enoyl_reductase"/>
    <property type="match status" value="1"/>
</dbReference>
<reference key="1">
    <citation type="submission" date="2008-02" db="EMBL/GenBank/DDBJ databases">
        <title>Complete sequence of Shewanella woodyi ATCC 51908.</title>
        <authorList>
            <consortium name="US DOE Joint Genome Institute"/>
            <person name="Copeland A."/>
            <person name="Lucas S."/>
            <person name="Lapidus A."/>
            <person name="Glavina del Rio T."/>
            <person name="Dalin E."/>
            <person name="Tice H."/>
            <person name="Bruce D."/>
            <person name="Goodwin L."/>
            <person name="Pitluck S."/>
            <person name="Sims D."/>
            <person name="Brettin T."/>
            <person name="Detter J.C."/>
            <person name="Han C."/>
            <person name="Kuske C.R."/>
            <person name="Schmutz J."/>
            <person name="Larimer F."/>
            <person name="Land M."/>
            <person name="Hauser L."/>
            <person name="Kyrpides N."/>
            <person name="Lykidis A."/>
            <person name="Zhao J.-S."/>
            <person name="Richardson P."/>
        </authorList>
    </citation>
    <scope>NUCLEOTIDE SEQUENCE [LARGE SCALE GENOMIC DNA]</scope>
    <source>
        <strain>ATCC 51908 / MS32</strain>
    </source>
</reference>
<sequence length="400" mass="43795">MIIKPKTRGFICTTTHPVGCEANVLEQINTTKAKGPITNGPKKVLVIGSSSGYGLSSRIAAAFGSGAATLGVFFEKPGTEKKPGTAGWYNSAAFDKFAKADGLYSKSINGDAFSHEAKQKAIDLIKADLGQIDMVVYSLASPVRKLPDSGELIRSSLKPIGETYTATAVDTNKDLIIETSVEPASEQEIQDTVTVMGGEDWELWLAALSDAGVLADGCKTVAYSYIGTELTWPIYWHGALGKAKMDLDRAAKALDEKLSTTGGSANVAVLKSVVTQASSAIPVMPLYIAMVFKKMREEGLHEGCMEQINRMFAERLYREDGQAPQVDDANRLRLDDWELREEIQQHCRDLWPSVTTENLSELTDYREYKDEFLKLFGFGVEGVDYDADVNPEVNFDVEQF</sequence>